<name>TSAW_ORITS</name>
<organism>
    <name type="scientific">Orientia tsutsugamushi</name>
    <name type="common">Rickettsia tsutsugamushi</name>
    <dbReference type="NCBI Taxonomy" id="784"/>
    <lineage>
        <taxon>Bacteria</taxon>
        <taxon>Pseudomonadati</taxon>
        <taxon>Pseudomonadota</taxon>
        <taxon>Alphaproteobacteria</taxon>
        <taxon>Rickettsiales</taxon>
        <taxon>Rickettsiaceae</taxon>
        <taxon>Rickettsieae</taxon>
        <taxon>Orientia</taxon>
    </lineage>
</organism>
<sequence>MKKIMLIASAMSALSLPFSASAIELGDEGVLECGPYAKIGVVGGMVTGVESARLDPADVDCKKHLSLTTMLPFGGTLAAGMTIAPGFRAELGVMYLRNINAEVELGEGKTGSGAANAAIDTGAPIRKRFKLTPPQPTIMPISIADRDLGVDTDILAQAAVGQQQLTVEQRAEDRIAWLKNYAGIDYMVPDSQNPNARVVNPVLLNITQGAPNVNPRPRQNLNILDHDQWRYLVVGVTALSNANKPSVSSVKVLSDKITQIYSDIRQFAKIANIEVPGAPLPNSASVEQIQTKMQELNDVLEELRESFDGYLANAFANQIQLNFQIQQAQQQQQQQQQGQVTAQEAAAAAAVRALNGNEQIIQLYKDLVKLQRHAGIRKAMEKLAAQEEGDDQSQVSCNDKKQQAVAEDSKAGSSKEGKNKEVELDLSMIVAQVKLYADVVATESFSIYIGGGVGVARTYGDIDGKSVKHIGVVASGVLGVAINVADGVCVDIDGGYMHSFSKIEDKYSVNAFIANAGVRYNF</sequence>
<protein>
    <recommendedName>
        <fullName>56 kDa type-specific antigen</fullName>
        <shortName>TSA</shortName>
    </recommendedName>
    <alternativeName>
        <fullName>56 kDa scrub typhus antigen</fullName>
    </alternativeName>
    <alternativeName>
        <fullName>STA56</fullName>
    </alternativeName>
    <alternativeName>
        <fullName>TSW56</fullName>
    </alternativeName>
</protein>
<comment type="function">
    <text>May be an adherent factor for rickettsial adsorption to the host-cell surface and a determinant of virulence of individual rickettsial strain. It is the major outer membrane protein.</text>
</comment>
<comment type="subcellular location">
    <subcellularLocation>
        <location>Cell membrane</location>
        <topology>Multi-pass membrane protein</topology>
    </subcellularLocation>
</comment>
<accession>P37919</accession>
<dbReference type="EMBL" id="M63383">
    <property type="protein sequence ID" value="AAA26398.1"/>
    <property type="molecule type" value="Genomic_DNA"/>
</dbReference>
<dbReference type="PIR" id="B42804">
    <property type="entry name" value="B42804"/>
</dbReference>
<dbReference type="SMR" id="P37919"/>
<dbReference type="GO" id="GO:0005886">
    <property type="term" value="C:plasma membrane"/>
    <property type="evidence" value="ECO:0007669"/>
    <property type="project" value="UniProtKB-SubCell"/>
</dbReference>
<dbReference type="Gene3D" id="2.40.160.20">
    <property type="match status" value="1"/>
</dbReference>
<dbReference type="InterPro" id="IPR011250">
    <property type="entry name" value="OMP/PagP_b-brl"/>
</dbReference>
<dbReference type="InterPro" id="IPR004933">
    <property type="entry name" value="TSA"/>
</dbReference>
<dbReference type="NCBIfam" id="NF033390">
    <property type="entry name" value="Orientia_TSA56"/>
    <property type="match status" value="1"/>
</dbReference>
<dbReference type="Pfam" id="PF03249">
    <property type="entry name" value="TSA"/>
    <property type="match status" value="1"/>
</dbReference>
<dbReference type="PRINTS" id="PR01707">
    <property type="entry name" value="56KDTSANTIGN"/>
</dbReference>
<dbReference type="SUPFAM" id="SSF56925">
    <property type="entry name" value="OMPA-like"/>
    <property type="match status" value="1"/>
</dbReference>
<evidence type="ECO:0000255" key="1"/>
<evidence type="ECO:0000256" key="2">
    <source>
        <dbReference type="SAM" id="MobiDB-lite"/>
    </source>
</evidence>
<keyword id="KW-1003">Cell membrane</keyword>
<keyword id="KW-0472">Membrane</keyword>
<keyword id="KW-0732">Signal</keyword>
<keyword id="KW-0812">Transmembrane</keyword>
<keyword id="KW-1133">Transmembrane helix</keyword>
<keyword id="KW-0843">Virulence</keyword>
<feature type="signal peptide" evidence="1">
    <location>
        <begin position="1"/>
        <end position="22"/>
    </location>
</feature>
<feature type="chain" id="PRO_0000022596" description="56 kDa type-specific antigen">
    <location>
        <begin position="23"/>
        <end position="522"/>
    </location>
</feature>
<feature type="transmembrane region" description="Helical" evidence="1">
    <location>
        <begin position="67"/>
        <end position="87"/>
    </location>
</feature>
<feature type="transmembrane region" description="Helical" evidence="1">
    <location>
        <begin position="470"/>
        <end position="490"/>
    </location>
</feature>
<feature type="region of interest" description="Disordered" evidence="2">
    <location>
        <begin position="385"/>
        <end position="417"/>
    </location>
</feature>
<feature type="compositionally biased region" description="Basic and acidic residues" evidence="2">
    <location>
        <begin position="398"/>
        <end position="417"/>
    </location>
</feature>
<proteinExistence type="inferred from homology"/>
<reference key="1">
    <citation type="journal article" date="1992" name="J. Biol. Chem.">
        <title>Diversity of immunodominant 56-kDa type-specific antigen (TSA) of Rickettsia tsutsugamushi. Sequence and comparative analyses of the genes encoding TSA homologues from four antigenic variants.</title>
        <authorList>
            <person name="Ohashi N."/>
            <person name="Nashimoto H."/>
            <person name="Ikeda H."/>
            <person name="Tamura A."/>
        </authorList>
    </citation>
    <scope>NUCLEOTIDE SEQUENCE [GENOMIC DNA]</scope>
    <source>
        <strain>Kawasaki</strain>
    </source>
</reference>